<accession>Q4WR82</accession>
<name>SIDC_ASPFU</name>
<feature type="chain" id="PRO_0000416543" description="Nonribosomal peptide synthetase sidC">
    <location>
        <begin position="1"/>
        <end position="4763"/>
    </location>
</feature>
<feature type="domain" description="Carrier 1" evidence="2 15">
    <location>
        <begin position="853"/>
        <end position="930"/>
    </location>
</feature>
<feature type="domain" description="Carrier 2" evidence="2 15">
    <location>
        <begin position="1979"/>
        <end position="2055"/>
    </location>
</feature>
<feature type="domain" description="Carrier 3" evidence="2 15">
    <location>
        <begin position="3099"/>
        <end position="3175"/>
    </location>
</feature>
<feature type="domain" description="Carrier 4" evidence="2 15">
    <location>
        <begin position="3647"/>
        <end position="3720"/>
    </location>
</feature>
<feature type="domain" description="Carrier 5" evidence="2 15">
    <location>
        <begin position="4204"/>
        <end position="4277"/>
    </location>
</feature>
<feature type="region of interest" description="Disordered" evidence="3">
    <location>
        <begin position="1"/>
        <end position="24"/>
    </location>
</feature>
<feature type="region of interest" description="Adenylation 1" evidence="1 15">
    <location>
        <begin position="296"/>
        <end position="815"/>
    </location>
</feature>
<feature type="region of interest" description="Condensation 1" evidence="1 15">
    <location>
        <begin position="1003"/>
        <end position="1396"/>
    </location>
</feature>
<feature type="region of interest" description="Adenylation 2" evidence="1 15">
    <location>
        <begin position="1398"/>
        <end position="1951"/>
    </location>
</feature>
<feature type="region of interest" description="Condensation 2" evidence="1 15">
    <location>
        <begin position="2092"/>
        <end position="2423"/>
    </location>
</feature>
<feature type="region of interest" description="Adenylation 3" evidence="1 15">
    <location>
        <begin position="2556"/>
        <end position="3070"/>
    </location>
</feature>
<feature type="region of interest" description="Condensation 3" evidence="1 15">
    <location>
        <begin position="3217"/>
        <end position="3626"/>
    </location>
</feature>
<feature type="region of interest" description="Condensation 4" evidence="1 15">
    <location>
        <begin position="3761"/>
        <end position="4093"/>
    </location>
</feature>
<feature type="region of interest" description="Condensation 5" evidence="1 15">
    <location>
        <begin position="4344"/>
        <end position="4593"/>
    </location>
</feature>
<feature type="compositionally biased region" description="Polar residues" evidence="3">
    <location>
        <begin position="15"/>
        <end position="24"/>
    </location>
</feature>
<feature type="modified residue" description="O-(pantetheine 4'-phosphoryl)serine" evidence="2">
    <location>
        <position position="890"/>
    </location>
</feature>
<feature type="modified residue" description="O-(pantetheine 4'-phosphoryl)serine" evidence="2">
    <location>
        <position position="2016"/>
    </location>
</feature>
<feature type="modified residue" description="O-(pantetheine 4'-phosphoryl)serine" evidence="2">
    <location>
        <position position="3136"/>
    </location>
</feature>
<feature type="modified residue" description="O-(pantetheine 4'-phosphoryl)serine" evidence="2">
    <location>
        <position position="3681"/>
    </location>
</feature>
<feature type="modified residue" description="O-(pantetheine 4'-phosphoryl)serine" evidence="2">
    <location>
        <position position="4238"/>
    </location>
</feature>
<evidence type="ECO:0000255" key="1"/>
<evidence type="ECO:0000255" key="2">
    <source>
        <dbReference type="PROSITE-ProRule" id="PRU00258"/>
    </source>
</evidence>
<evidence type="ECO:0000256" key="3">
    <source>
        <dbReference type="SAM" id="MobiDB-lite"/>
    </source>
</evidence>
<evidence type="ECO:0000269" key="4">
    <source>
    </source>
</evidence>
<evidence type="ECO:0000269" key="5">
    <source>
    </source>
</evidence>
<evidence type="ECO:0000269" key="6">
    <source>
    </source>
</evidence>
<evidence type="ECO:0000269" key="7">
    <source>
    </source>
</evidence>
<evidence type="ECO:0000269" key="8">
    <source>
    </source>
</evidence>
<evidence type="ECO:0000269" key="9">
    <source>
    </source>
</evidence>
<evidence type="ECO:0000269" key="10">
    <source>
    </source>
</evidence>
<evidence type="ECO:0000303" key="11">
    <source>
    </source>
</evidence>
<evidence type="ECO:0000303" key="12">
    <source>
    </source>
</evidence>
<evidence type="ECO:0000303" key="13">
    <source>
    </source>
</evidence>
<evidence type="ECO:0000305" key="14"/>
<evidence type="ECO:0000305" key="15">
    <source>
    </source>
</evidence>
<evidence type="ECO:0000305" key="16">
    <source>
    </source>
</evidence>
<protein>
    <recommendedName>
        <fullName evidence="11">Nonribosomal peptide synthetase sidC</fullName>
        <shortName evidence="11">NPRS sidC</shortName>
        <ecNumber evidence="16">6.3.2.-</ecNumber>
    </recommendedName>
    <alternativeName>
        <fullName evidence="13">Siderophore peptide synthetase C</fullName>
    </alternativeName>
</protein>
<gene>
    <name evidence="12" type="primary">NRPS2</name>
    <name evidence="11" type="synonym">sidC</name>
    <name type="ORF">AFUA_1G17200</name>
</gene>
<sequence length="4763" mass="522418">MAGTANPADEGLTGPTETTNHINSARSDVALGSSLSGIVPMTKIPALNTIDQFVAEGSPDDLIGQSPWRRIGQGDVSGELATGLIEGYARFVSALTGVEDVAFAVLCQASTRPSQALICASVTLTDQGREVPSAWQCAVRELDFSYYNRSEVQFALDLGLTGGPENRKAGLSTLAENDCLSLYVRGSTDGLCISFTYPRRLIPEAAVSQLLKTITFHITQTTGCLQSTGAWPDDPTPDLSILNFPPLMIPPSRDHDSATMPRHSKSFLLHSAFEGWAQKSPTSIALDFVHSLPSASTVAEHSTLTYAALNAAATYLAIHIRSLLSDNTRNAGSRIIPVYMSTSPELYISYLGILKAGYAFCPIPTDAPPQRVREIFQDIDSSVILGDGEEPSSVSWFLSAAGEATSKPTWVNVAEVSRWKHLSREDTEIATEDRLFEPPDIDHNEIAYLLFTSGSTGKPKGVQVSHLAVTCSIESHATAIPLPGTSAGDFRWFQFASPTFDPSLMEIFVTLSSGGTLCSASRSLTLTDLEGTINEARATVMMATPSLAALLRPAQLTTLQYLWTMGEKLNRTVIENFTQKAHSNDLNGDSVPALRLLVNAYGPTEAAINCTFFAPVEYHTRGSIIGEPLPTCSIFVLDPASHTPKPIPAGLAGELAIGGPQVSQGYLNRPEETANSFVHSPEYGYLYRTGDLARIVWDEKGAQVIEFLGRITSDQVKISGRRVELGEIESVLATLTGVREVVAVVPKRDASVQGSEQIVACIVADSLSEDAAPEFVRLADECAHRHLAAYMCPSSYVFFDSIPRTSSGKVDRNSISSMLQQGKDSGMKFYMPSNDVPEARGMARAEWDPLEDEKALELRTLVLDLVAQTTGQDISVIKPNTSLYTLGLDSLGSMQFLQKLRDKSLHNLSVGDVLQSNTVNGLLTLILNGKTNLRGLTNGQLADDSRMSLAEHLQAFNDTNLSRCAKRLSISPERIQTVLPTTETQSGMLTSFLRTSTDSSFATRSYIYHSVISLEPHVDIERLKKAWESVIASYDSFRTRFCWIDDDMAPFAQCILKEDAASAPMWAINHTFGDSMHEDSLTRALREAENTISLDSPWKLSLLESSGDKVIILSMFHGIFDGGSLQLLLENVSSVYDGQLPAPRTSLEHVVVNHFQANQTATSNFWKEYLNKYSPIAFPSLTAYRPPAVNATGCVEITPRTTHDILKQQSRTIGSTPLSVLQAAWASLLLAYTGTQDHDVVMGSVISGRFDPDSEICIGPTFTTIPTRLALGQIPKAGGFWTNKSVVNHLASLNAKALSHLQPRLGSLVTADSKLPYDTVLAYQDFSAGSSTSSIWKSIDHPPMANDYAVMIEVWPARDSSLTLRASFALSQMDRDGAKVMLHQLDDIIAFILQNPDGDFENALLYTRPDLKASYNPMPKEADEVSDGDLIHTKFENHANSHPDDMALLFKYDLEDDGNLQNISWTYGELNARADNLAAYLCETYDKLTNKVVPICIEKSPAMYIAILGILKAGGAWCPIDTFSPAQRRHDLIKRTGAGVLLVSSEDGEQPKDAIPIGIDVVDVKKYADPLVSWPSVGRWSSKKLSSPAGLAYLIWTSGTTGAPKGVPITHSAAVSCFRSLKKDIPSDVSGGVVRCLQFSQYTFDVSIQDLFYTWSLGGVLISATREIMLGSFAKLANTTRATHAHLTPAFAAGVPRNSCETLEVITMIGEKLTQHVADDWGTDMRAYNTYGPAEVTIVSTVREFGNDCLNIKSANVGWPMESVSVFVTRNKQIVMKNAVGELALGGPQLSPGYLDQEDVTKAKYVWSEEAGQILYYTGDLVRMLADGSLEFMNRVDDLVKIGGIRIELSEISFALGGCHPLVENIETLYIDRPDRPSKVLVAFLSASNATGADAGDDLLLLNDSALQIALSTREKAHTALPAYMVPSVYLVMKRIPRTQSAKTDRRALQAAYASVDIEDWENRMNPENNATGHPTDDLVASDAMEKIVHMIASLINISPSIVAKASRLRSLGIDSIHAIRLASRLKEAGYRLSFIEVINCVTVQDLARLCTSSSEVDALPAAEFDINLFNDQWHDIVASKVDGEFFTVRATPIQESLLSETMGTYNLYWSNHLFSLDKSVDVKRLKQAWLALCQKNEALRTGFIPVAEVNNSSRKDDLDFSILQVLHDHPTLDWEYVMCEDHEWDRLLHSRIEDVMKAHQKTYFKQPPWAVTVLDNGVERFMVLTMHHSIHDGPSLDLIERDLRSAYIDKPPSRYQLRSALSKILPTDEMAAETRRFWSSELQKYSELDAPAWPDLTGKRKPETAVQEHNLISEQMRMTEPLEKLQSISAELGVSSIASLIRAAWGFVSLSYLGVPAAVFAETVSDRILHADLDNGIGPLISVVPVPFDPKGTAREVLAEQQRISTQSRKYRHIHAREVRRMLNRPRGEPLYPAVFAFHPAGAEADGTTNPGLWHELEDRIGLHVEHPMAFNVLQNADSSLVLEVFSDASLMSHEHLSIFVRQVDSLVSAMLANPDKELRELINHLPPSLRSKSSQHVSEAVRNSVTLSPTHWLELNAREHPEWTAVEVASSISASGIEKQSMSYGTLNAAANCVAAFIASVGYKNRMIAVCAGRNLPSYPVIVGVFKSGNTYLPIDNNLPNDRKTFLIEDGNCPLVFTETAFAATFSDVPETCRVLCIDHPSFVDSLAGMPTDNRAYASDPQDNAYLLYTSGSTGKPKGVMVSRANLSAFIESFSEFVCRVAPSTLELGGRGRYLAQASRAFDVHLLEMFFAWRHGMASVTAERTMLLDDLQLTITKWGITHASMVPSLVDQTNLRPELCPELKYLSVGGEKISKRVLDTWAGLPHVALANAYGPTEVTIGCTFALVGKETTIRNIGPPLSACTCHVLIPGTMDYALRGQTGELCFTGDIVGNGYLNRPDATGFVQGPDGEKMYRTGDIGRLMSDDSVEYVGRGDDQTKIRGQRLELGEVSEVIRSSSPVQIGVVTTVTKHPGLARPQLISFIARSGDKSRQRSGDATIIHSDLATLGKELRDACQRKLPAYMVPEIILPITFIPLAPMSGKANIKELHSMFSSLPLASILQGNNPGTSDTAAFTDRPLSSDEEAVVSEICAVIKVERENINPLTNIFEIGLDSLSAISLSVKLRRIGYDATVALVMGNPVVEQLAQLPRKSTEAVADPHSSDLTKRLAELETEYHKGYTRPANSGQVAVRPCLPLQEGLVARSINSEEDQLYVNHIALSFGPGLDSGRLRFAWQDTADNSEILRTCFAPLEKEIVQVVLTPGGAISWTEDEYDSLEDCIKEQRARQQEISRGIIKNMTDVPPVRFHLATLSSKRPLVLFIAIHHALYDGESFSMLLEDVAARYVGEPVTRRGSPAAFIDHVYGQNLEKAQQHWVNALSDCQPTIFRVDTGVVEETTFINRKLHAGLAKLERHSADLHTTVPSLMQALFALLLADRVNSSDVTYGLVLSGRAVAVPDAESVLLPCITTIPARLNTSGLKTVSDVVRSVHQSTARSLEYQHTSLRHIQRWLKSEKPLFDCLFSYIRSTPAPKNTLWGQLESTMPSEYPLAVEIEANSEKDEMYVHCGFSPSFGSADRGQEFLEKLDALLSAFLFEDDIALDSFSLANSGNPGSRATEVKWDATTWSATETKIRDLTATFCGLDVVNVSKGTSFISLGIDSVTAIQFARKLRELQFEIVPSDIMRFPCVGALAEHVDERSSEGRQSARVGDKKPRVSLAAHRDNVPLLDDGDSVAAIFESTPLQAGMITRTLGSDTQVYVHPHIVRLTEGVDIDRLSKAISEVVAKNDILRTSFHPIAENGVTWVGAVHTNPPLQWKEITLPSNADVIAELTSLYSFREVADFETPPVRFVLVHRKNEKLFVVIMHHALYDGVSLPLLFEELAATYHGQTTVGRPQFSEIAHYIVEGQNDSCDFWTKKLAGYEPVEIPALSSSEATERMLLSERKIGLDVEKVVESCKSMEVTVQSVALLAYAKVLACLGGKRDVVFGQVLAGRSLPVPGADQTIGPLFNTVAQRVLFEPKFLSNREMAQRVQQLTSESQAFQHAPLKDVQRALRQEHGMNAASLFDTLFVFQKSADLTTDTPHEQQIWTPFETEGYAAQAEHKLNVEIDHGREAIIVSGSGDGRYICQQALDEFMADFCTAFQDIIEHPSRCATAAPERLGGLPLRLSNAEEPERGHSESDAPAHESIIRDVLAEVSGVSVDSITPSTSIYNIGLDSLSAIRIASICRSRGLKAGVADVLQGNTLRGISARIISPVEAPIQAREPLIKDHEAIEKAVLQRLGLNKDEVETILPCLSGQLYHLVSWLKSGRTLFEPAWSYYSIERIDSGKLEEAWNQLRQRHHILRTCFVATSPSMAVQAVLKDAPQNAEIFKVIESPACIEEAAKAQAREEGLNPSSLFVPPVRLRLLKASDKDGIQIFINHAAYDAWTMPMFVSELAHLYREQPVESTPDFPSFVEYATRSLREVDEQTYWSSQVGSSLPTLIKPTNQGLPKQFFVGVWEKVQNLSQLERACRSACLSLQSVVLLAVSRSLARTTGVQSPTIGLYQTGRSASFSNIENLSGPCLNVTPFTFPSPGAKAESNALDEVQAIQNSLAERVLYEQSCLRDILTNWASTKGKGPLFNTWVNLLWMHQPSTRGDSKSHTDLDLFQPLRIGVPTDFIPATPLPDPSGETTSISALDTSYLPDENLYIDIGPDYSTDTIGFGVRVEGGLLTEKEVRGMVDDVSGEIEGIMAAIQQGKSR</sequence>
<organism>
    <name type="scientific">Aspergillus fumigatus (strain ATCC MYA-4609 / CBS 101355 / FGSC A1100 / Af293)</name>
    <name type="common">Neosartorya fumigata</name>
    <dbReference type="NCBI Taxonomy" id="330879"/>
    <lineage>
        <taxon>Eukaryota</taxon>
        <taxon>Fungi</taxon>
        <taxon>Dikarya</taxon>
        <taxon>Ascomycota</taxon>
        <taxon>Pezizomycotina</taxon>
        <taxon>Eurotiomycetes</taxon>
        <taxon>Eurotiomycetidae</taxon>
        <taxon>Eurotiales</taxon>
        <taxon>Aspergillaceae</taxon>
        <taxon>Aspergillus</taxon>
        <taxon>Aspergillus subgen. Fumigati</taxon>
    </lineage>
</organism>
<comment type="function">
    <text evidence="4 5 6 7 8 9 10">Nonribosomal peptide synthase; part of the siderophore biosynthetic pathway (PubMed:17845073). Aspergillus fumigatus produces four types of siderophores, low-molecular-mass iron chelators, including excreted fusarinine C (FsC) and triacetylfusarinine C (TAFC) for iron uptake; and intacellular ferricrocin (FC) for hyphal and hydroxyferricrocin (HFC) for conidial iron distribution and storage. TAFC consists of three N(2)-acetyl-N(5)-anhydromevalonyl-N(5)-hydroxyornithine residues cyclically linked by ester bonds; FC is a cyclic hexapeptide with the structure Gly-Ser-Gly-(N(5)-acetyl-N(5)-hydroxyornithine)x3. The biosynthesis of all four siderophores depends on the hydroxylation of ornithine, catalyzed by the monooxygenase sidA (PubMed:15504822, PubMed:16113265). Subsequently, the pathways for biosynthesis of extra- and intracellular siderophores split (PubMed:17845073). For biosynthesis of extracellular siderophores, the transacylase sidF transfers anhydromevalonyl to N(5)-hydroxyornithine (PubMed:17845073). The required anhydromevalonyl-CoA moiety is derived from mevalonate by CoA ligation and dehydration catalyzed by sidI and sidH respectively (PubMed:22106303). The acetylation of N(5)-hydroxyornithine for FC biosynthesis involves the constitutively expressed sidL (PubMed:21622789). FC is hydroxylated to HFC by an as yet uncharacterized enzyme during conidiation (PubMed:17845073). Assembly of fusarinine C (FsC) and FC is catalyzed by two different nonribosomal peptide synthetases (NRPS), sidD and sidC respectively (PubMed:15953695, PubMed:17464044, PubMed:17845073). Subsequently, sidG catalyzes N2-acetylation of FsC for forming TAFC (PubMed:17845073). Both extra- and intracellular siderophores are crucial for growth during iron limitation and virulence (PubMed:16113265).</text>
</comment>
<comment type="pathway">
    <text evidence="8">Siderophore biosynthesis.</text>
</comment>
<comment type="induction">
    <text evidence="5 8">Expression is induced during iron starvation (PubMed:15953695, PubMed:17845073).</text>
</comment>
<comment type="domain">
    <text evidence="5 7">NRP synthetases are composed of discrete domains (adenylation (A), thiolation (T) or peptidyl carrier protein (PCP) and condensation (C) domains) which when grouped together are referred to as a single module. Each module is responsible for the recognition (via the A domain) and incorporation of a single amino acid into the growing peptide product. Thus, an NRP synthetase is generally composed of one or more modules and can terminate in a thioesterase domain (TE) that releases the newly synthesized peptide from the enzyme. Occasionally, epimerase (E) domains (responsible for L- to D- amino acid conversion) are present within the NRP synthetase. NRPS2 has the following architecture: A-T-C-A-T-C-A-T-C-T-C-T-C.</text>
</comment>
<comment type="disruption phenotype">
    <text evidence="8">Leads to a delay in both conidial swelling and germ tube production during iron-depleted conditions (PubMed:17845073).</text>
</comment>
<comment type="similarity">
    <text evidence="14">Belongs to the NRP synthetase family.</text>
</comment>
<keyword id="KW-0436">Ligase</keyword>
<keyword id="KW-0596">Phosphopantetheine</keyword>
<keyword id="KW-0597">Phosphoprotein</keyword>
<keyword id="KW-1185">Reference proteome</keyword>
<keyword id="KW-0677">Repeat</keyword>
<keyword id="KW-0843">Virulence</keyword>
<proteinExistence type="evidence at transcript level"/>
<reference key="1">
    <citation type="journal article" date="2005" name="Nature">
        <title>Genomic sequence of the pathogenic and allergenic filamentous fungus Aspergillus fumigatus.</title>
        <authorList>
            <person name="Nierman W.C."/>
            <person name="Pain A."/>
            <person name="Anderson M.J."/>
            <person name="Wortman J.R."/>
            <person name="Kim H.S."/>
            <person name="Arroyo J."/>
            <person name="Berriman M."/>
            <person name="Abe K."/>
            <person name="Archer D.B."/>
            <person name="Bermejo C."/>
            <person name="Bennett J.W."/>
            <person name="Bowyer P."/>
            <person name="Chen D."/>
            <person name="Collins M."/>
            <person name="Coulsen R."/>
            <person name="Davies R."/>
            <person name="Dyer P.S."/>
            <person name="Farman M.L."/>
            <person name="Fedorova N."/>
            <person name="Fedorova N.D."/>
            <person name="Feldblyum T.V."/>
            <person name="Fischer R."/>
            <person name="Fosker N."/>
            <person name="Fraser A."/>
            <person name="Garcia J.L."/>
            <person name="Garcia M.J."/>
            <person name="Goble A."/>
            <person name="Goldman G.H."/>
            <person name="Gomi K."/>
            <person name="Griffith-Jones S."/>
            <person name="Gwilliam R."/>
            <person name="Haas B.J."/>
            <person name="Haas H."/>
            <person name="Harris D.E."/>
            <person name="Horiuchi H."/>
            <person name="Huang J."/>
            <person name="Humphray S."/>
            <person name="Jimenez J."/>
            <person name="Keller N."/>
            <person name="Khouri H."/>
            <person name="Kitamoto K."/>
            <person name="Kobayashi T."/>
            <person name="Konzack S."/>
            <person name="Kulkarni R."/>
            <person name="Kumagai T."/>
            <person name="Lafton A."/>
            <person name="Latge J.-P."/>
            <person name="Li W."/>
            <person name="Lord A."/>
            <person name="Lu C."/>
            <person name="Majoros W.H."/>
            <person name="May G.S."/>
            <person name="Miller B.L."/>
            <person name="Mohamoud Y."/>
            <person name="Molina M."/>
            <person name="Monod M."/>
            <person name="Mouyna I."/>
            <person name="Mulligan S."/>
            <person name="Murphy L.D."/>
            <person name="O'Neil S."/>
            <person name="Paulsen I."/>
            <person name="Penalva M.A."/>
            <person name="Pertea M."/>
            <person name="Price C."/>
            <person name="Pritchard B.L."/>
            <person name="Quail M.A."/>
            <person name="Rabbinowitsch E."/>
            <person name="Rawlins N."/>
            <person name="Rajandream M.A."/>
            <person name="Reichard U."/>
            <person name="Renauld H."/>
            <person name="Robson G.D."/>
            <person name="Rodriguez de Cordoba S."/>
            <person name="Rodriguez-Pena J.M."/>
            <person name="Ronning C.M."/>
            <person name="Rutter S."/>
            <person name="Salzberg S.L."/>
            <person name="Sanchez M."/>
            <person name="Sanchez-Ferrero J.C."/>
            <person name="Saunders D."/>
            <person name="Seeger K."/>
            <person name="Squares R."/>
            <person name="Squares S."/>
            <person name="Takeuchi M."/>
            <person name="Tekaia F."/>
            <person name="Turner G."/>
            <person name="Vazquez de Aldana C.R."/>
            <person name="Weidman J."/>
            <person name="White O."/>
            <person name="Woodward J.R."/>
            <person name="Yu J.-H."/>
            <person name="Fraser C.M."/>
            <person name="Galagan J.E."/>
            <person name="Asai K."/>
            <person name="Machida M."/>
            <person name="Hall N."/>
            <person name="Barrell B.G."/>
            <person name="Denning D.W."/>
        </authorList>
    </citation>
    <scope>NUCLEOTIDE SEQUENCE [LARGE SCALE GENOMIC DNA]</scope>
    <source>
        <strain>ATCC MYA-4609 / CBS 101355 / FGSC A1100 / Af293</strain>
    </source>
</reference>
<reference key="2">
    <citation type="journal article" date="2004" name="J. Exp. Med.">
        <title>Siderophore biosynthesis but not reductive iron assimilation is essential for Aspergillus fumigatus virulence.</title>
        <authorList>
            <person name="Schrettl M."/>
            <person name="Bignell E."/>
            <person name="Kragl C."/>
            <person name="Joechl C."/>
            <person name="Rogers T."/>
            <person name="Arst H.N. Jr."/>
            <person name="Haynes K."/>
            <person name="Haas H."/>
        </authorList>
    </citation>
    <scope>FUNCTION</scope>
</reference>
<reference key="3">
    <citation type="journal article" date="2005" name="Infect. Immun.">
        <title>The Aspergillus fumigatus siderophore biosynthetic gene sidA, encoding L-ornithine N(5)-oxygenase, is required for virulence.</title>
        <authorList>
            <person name="Hissen A.H."/>
            <person name="Wan A.N."/>
            <person name="Warwas M.L."/>
            <person name="Pinto L.J."/>
            <person name="Moore M.M."/>
        </authorList>
    </citation>
    <scope>FUNCTION</scope>
    <source>
        <strain>NIH 5233 / ATCC 13073</strain>
    </source>
</reference>
<reference key="4">
    <citation type="journal article" date="2005" name="FEMS Microbiol. Lett.">
        <title>The expression of selected non-ribosomal peptide synthetases in Aspergillus fumigatus is controlled by the availability of free iron.</title>
        <authorList>
            <person name="Reiber K."/>
            <person name="Reeves E.P."/>
            <person name="Neville C.M."/>
            <person name="Winkler R."/>
            <person name="Gebhardt P."/>
            <person name="Kavanagh K."/>
            <person name="Doyle S."/>
        </authorList>
    </citation>
    <scope>DOMAIN</scope>
    <scope>INDUCTION</scope>
    <scope>FUNCTION</scope>
</reference>
<reference key="5">
    <citation type="journal article" date="2006" name="Gene">
        <title>Phylogenomic analysis of non-ribosomal peptide synthetases in the genus Aspergillus.</title>
        <authorList>
            <person name="Cramer R.A. Jr."/>
            <person name="Stajich J.E."/>
            <person name="Yamanaka Y."/>
            <person name="Dietrich F.S."/>
            <person name="Steinbach W.J."/>
            <person name="Perfect J.R."/>
        </authorList>
    </citation>
    <scope>NOMENCLATURE</scope>
</reference>
<reference key="6">
    <citation type="journal article" date="2007" name="PLoS Pathog.">
        <title>Distinct roles for intra- and extracellular siderophores during Aspergillus fumigatus infection.</title>
        <authorList>
            <person name="Schrettl M."/>
            <person name="Bignell E."/>
            <person name="Kragl C."/>
            <person name="Sabiha Y."/>
            <person name="Loss O."/>
            <person name="Eisendle M."/>
            <person name="Wallner A."/>
            <person name="Arst H.N. Jr."/>
            <person name="Haynes K."/>
            <person name="Haas H."/>
        </authorList>
    </citation>
    <scope>FUNCTION</scope>
    <scope>DISRUPTION PHENOTYPE</scope>
    <scope>INDUCTION</scope>
</reference>
<reference key="7">
    <citation type="journal article" date="2007" name="Microbiology">
        <title>Nonribosomal peptide synthesis in Aspergillus fumigatus and other fungi.</title>
        <authorList>
            <person name="Stack D."/>
            <person name="Neville C."/>
            <person name="Doyle S."/>
        </authorList>
    </citation>
    <scope>REVIEW ON FUNCTION</scope>
    <scope>DOMAIN</scope>
</reference>
<reference key="8">
    <citation type="journal article" date="2008" name="Mol. Microbiol.">
        <title>SreA-mediated iron regulation in Aspergillus fumigatus.</title>
        <authorList>
            <person name="Schrettl M."/>
            <person name="Kim H.S."/>
            <person name="Eisendle M."/>
            <person name="Kragl C."/>
            <person name="Nierman W.C."/>
            <person name="Heinekamp T."/>
            <person name="Werner E.R."/>
            <person name="Jacobsen I."/>
            <person name="Illmer P."/>
            <person name="Yi H."/>
            <person name="Brakhage A.A."/>
            <person name="Haas H."/>
        </authorList>
    </citation>
    <scope>INDUCTION</scope>
</reference>
<reference key="9">
    <citation type="journal article" date="2011" name="Appl. Environ. Microbiol.">
        <title>SidL, an Aspergillus fumigatus transacetylase involved in biosynthesis of the siderophores ferricrocin and hydroxyferricrocin.</title>
        <authorList>
            <person name="Blatzer M."/>
            <person name="Schrettl M."/>
            <person name="Sarg B."/>
            <person name="Lindner H.H."/>
            <person name="Pfaller K."/>
            <person name="Haas H."/>
        </authorList>
    </citation>
    <scope>FUNCTION</scope>
</reference>
<reference key="10">
    <citation type="journal article" date="2012" name="Proc. Natl. Acad. Sci. U.S.A.">
        <title>Mevalonate governs interdependency of ergosterol and siderophore biosyntheses in the fungal pathogen Aspergillus fumigatus.</title>
        <authorList>
            <person name="Yasmin S."/>
            <person name="Alcazar-Fuoli L."/>
            <person name="Gruendlinger M."/>
            <person name="Puempel T."/>
            <person name="Cairns T."/>
            <person name="Blatzer M."/>
            <person name="Lopez J.F."/>
            <person name="Grimalt J.O."/>
            <person name="Bignell E."/>
            <person name="Haas H."/>
        </authorList>
    </citation>
    <scope>FUNCTION</scope>
</reference>
<dbReference type="EC" id="6.3.2.-" evidence="16"/>
<dbReference type="EMBL" id="AAHF01000004">
    <property type="protein sequence ID" value="EAL91050.1"/>
    <property type="molecule type" value="Genomic_DNA"/>
</dbReference>
<dbReference type="RefSeq" id="XP_753088.1">
    <property type="nucleotide sequence ID" value="XM_747995.1"/>
</dbReference>
<dbReference type="SMR" id="Q4WR82"/>
<dbReference type="STRING" id="330879.Q4WR82"/>
<dbReference type="EnsemblFungi" id="EAL91050">
    <property type="protein sequence ID" value="EAL91050"/>
    <property type="gene ID" value="AFUA_1G17200"/>
</dbReference>
<dbReference type="GeneID" id="3510120"/>
<dbReference type="KEGG" id="afm:AFUA_1G17200"/>
<dbReference type="VEuPathDB" id="FungiDB:Afu1g17200"/>
<dbReference type="eggNOG" id="KOG1178">
    <property type="taxonomic scope" value="Eukaryota"/>
</dbReference>
<dbReference type="HOGENOM" id="CLU_000092_1_0_1"/>
<dbReference type="InParanoid" id="Q4WR82"/>
<dbReference type="OMA" id="ITMIGEK"/>
<dbReference type="OrthoDB" id="416786at2759"/>
<dbReference type="Proteomes" id="UP000002530">
    <property type="component" value="Chromosome 1"/>
</dbReference>
<dbReference type="GO" id="GO:0005737">
    <property type="term" value="C:cytoplasm"/>
    <property type="evidence" value="ECO:0000318"/>
    <property type="project" value="GO_Central"/>
</dbReference>
<dbReference type="GO" id="GO:0016874">
    <property type="term" value="F:ligase activity"/>
    <property type="evidence" value="ECO:0007669"/>
    <property type="project" value="UniProtKB-KW"/>
</dbReference>
<dbReference type="GO" id="GO:0031177">
    <property type="term" value="F:phosphopantetheine binding"/>
    <property type="evidence" value="ECO:0000318"/>
    <property type="project" value="GO_Central"/>
</dbReference>
<dbReference type="GO" id="GO:0043041">
    <property type="term" value="P:amino acid activation for nonribosomal peptide biosynthetic process"/>
    <property type="evidence" value="ECO:0000318"/>
    <property type="project" value="GO_Central"/>
</dbReference>
<dbReference type="GO" id="GO:0010106">
    <property type="term" value="P:cellular response to iron ion starvation"/>
    <property type="evidence" value="ECO:0000315"/>
    <property type="project" value="AspGD"/>
</dbReference>
<dbReference type="GO" id="GO:0031171">
    <property type="term" value="P:ferricrocin biosynthetic process"/>
    <property type="evidence" value="ECO:0000315"/>
    <property type="project" value="AspGD"/>
</dbReference>
<dbReference type="GO" id="GO:0006879">
    <property type="term" value="P:intracellular iron ion homeostasis"/>
    <property type="evidence" value="ECO:0000315"/>
    <property type="project" value="AspGD"/>
</dbReference>
<dbReference type="GO" id="GO:0019184">
    <property type="term" value="P:nonribosomal peptide biosynthetic process"/>
    <property type="evidence" value="ECO:0000255"/>
    <property type="project" value="AspGD"/>
</dbReference>
<dbReference type="GO" id="GO:0019748">
    <property type="term" value="P:secondary metabolic process"/>
    <property type="evidence" value="ECO:0000303"/>
    <property type="project" value="AspGD"/>
</dbReference>
<dbReference type="GO" id="GO:0044550">
    <property type="term" value="P:secondary metabolite biosynthetic process"/>
    <property type="evidence" value="ECO:0000315"/>
    <property type="project" value="AspGD"/>
</dbReference>
<dbReference type="GO" id="GO:0019290">
    <property type="term" value="P:siderophore biosynthetic process"/>
    <property type="evidence" value="ECO:0000315"/>
    <property type="project" value="AspGD"/>
</dbReference>
<dbReference type="GO" id="GO:0033214">
    <property type="term" value="P:siderophore-dependent iron import into cell"/>
    <property type="evidence" value="ECO:0000315"/>
    <property type="project" value="AspGD"/>
</dbReference>
<dbReference type="CDD" id="cd05918">
    <property type="entry name" value="A_NRPS_SidN3_like"/>
    <property type="match status" value="3"/>
</dbReference>
<dbReference type="CDD" id="cd19542">
    <property type="entry name" value="CT_NRPS-like"/>
    <property type="match status" value="4"/>
</dbReference>
<dbReference type="FunFam" id="3.30.559.10:FF:000051">
    <property type="entry name" value="Nonribosomal peptide synthetase sidC"/>
    <property type="match status" value="1"/>
</dbReference>
<dbReference type="FunFam" id="3.30.559.10:FF:000055">
    <property type="entry name" value="Nonribosomal peptide synthetase sidC"/>
    <property type="match status" value="1"/>
</dbReference>
<dbReference type="FunFam" id="1.10.1200.10:FF:000018">
    <property type="entry name" value="Nonribosomal siderophore peptide synthase SidC"/>
    <property type="match status" value="1"/>
</dbReference>
<dbReference type="FunFam" id="1.10.1200.10:FF:000027">
    <property type="entry name" value="Nonribosomal siderophore peptide synthase SidC"/>
    <property type="match status" value="1"/>
</dbReference>
<dbReference type="FunFam" id="1.10.1200.10:FF:000049">
    <property type="entry name" value="Nonribosomal siderophore peptide synthase SidC"/>
    <property type="match status" value="1"/>
</dbReference>
<dbReference type="FunFam" id="3.30.300.30:FF:000033">
    <property type="entry name" value="Nonribosomal siderophore peptide synthase SidC"/>
    <property type="match status" value="1"/>
</dbReference>
<dbReference type="FunFam" id="3.30.300.30:FF:000038">
    <property type="entry name" value="Nonribosomal siderophore peptide synthase SidC"/>
    <property type="match status" value="1"/>
</dbReference>
<dbReference type="FunFam" id="3.30.300.30:FF:000057">
    <property type="entry name" value="Nonribosomal siderophore peptide synthase SidC"/>
    <property type="match status" value="1"/>
</dbReference>
<dbReference type="FunFam" id="3.30.559.10:FF:000038">
    <property type="entry name" value="Nonribosomal siderophore peptide synthase SidC"/>
    <property type="match status" value="1"/>
</dbReference>
<dbReference type="FunFam" id="3.30.559.30:FF:000011">
    <property type="entry name" value="Nonribosomal siderophore peptide synthase SidC"/>
    <property type="match status" value="1"/>
</dbReference>
<dbReference type="FunFam" id="3.30.559.30:FF:000014">
    <property type="entry name" value="Nonribosomal siderophore peptide synthase SidC"/>
    <property type="match status" value="1"/>
</dbReference>
<dbReference type="FunFam" id="3.30.559.30:FF:000015">
    <property type="entry name" value="Nonribosomal siderophore peptide synthase SidC"/>
    <property type="match status" value="1"/>
</dbReference>
<dbReference type="FunFam" id="3.30.559.30:FF:000018">
    <property type="entry name" value="Nonribosomal siderophore peptide synthase SidC"/>
    <property type="match status" value="1"/>
</dbReference>
<dbReference type="FunFam" id="3.30.559.30:FF:000019">
    <property type="entry name" value="Nonribosomal siderophore peptide synthase SidC"/>
    <property type="match status" value="1"/>
</dbReference>
<dbReference type="FunFam" id="3.40.50.12780:FF:000024">
    <property type="entry name" value="Nonribosomal siderophore peptide synthase SidC"/>
    <property type="match status" value="2"/>
</dbReference>
<dbReference type="FunFam" id="3.40.50.12780:FF:000056">
    <property type="entry name" value="Nonribosomal siderophore peptide synthase SidC"/>
    <property type="match status" value="1"/>
</dbReference>
<dbReference type="Gene3D" id="3.30.300.30">
    <property type="match status" value="3"/>
</dbReference>
<dbReference type="Gene3D" id="1.10.1200.10">
    <property type="entry name" value="ACP-like"/>
    <property type="match status" value="5"/>
</dbReference>
<dbReference type="Gene3D" id="3.30.559.10">
    <property type="entry name" value="Chloramphenicol acetyltransferase-like domain"/>
    <property type="match status" value="5"/>
</dbReference>
<dbReference type="Gene3D" id="3.40.50.12780">
    <property type="entry name" value="N-terminal domain of ligase-like"/>
    <property type="match status" value="3"/>
</dbReference>
<dbReference type="Gene3D" id="3.30.559.30">
    <property type="entry name" value="Nonribosomal peptide synthetase, condensation domain"/>
    <property type="match status" value="5"/>
</dbReference>
<dbReference type="InterPro" id="IPR036736">
    <property type="entry name" value="ACP-like_sf"/>
</dbReference>
<dbReference type="InterPro" id="IPR025110">
    <property type="entry name" value="AMP-bd_C"/>
</dbReference>
<dbReference type="InterPro" id="IPR045851">
    <property type="entry name" value="AMP-bd_C_sf"/>
</dbReference>
<dbReference type="InterPro" id="IPR020845">
    <property type="entry name" value="AMP-binding_CS"/>
</dbReference>
<dbReference type="InterPro" id="IPR000873">
    <property type="entry name" value="AMP-dep_synth/lig_dom"/>
</dbReference>
<dbReference type="InterPro" id="IPR042099">
    <property type="entry name" value="ANL_N_sf"/>
</dbReference>
<dbReference type="InterPro" id="IPR023213">
    <property type="entry name" value="CAT-like_dom_sf"/>
</dbReference>
<dbReference type="InterPro" id="IPR001242">
    <property type="entry name" value="Condensatn"/>
</dbReference>
<dbReference type="InterPro" id="IPR020806">
    <property type="entry name" value="PKS_PP-bd"/>
</dbReference>
<dbReference type="InterPro" id="IPR009081">
    <property type="entry name" value="PP-bd_ACP"/>
</dbReference>
<dbReference type="InterPro" id="IPR006162">
    <property type="entry name" value="Ppantetheine_attach_site"/>
</dbReference>
<dbReference type="NCBIfam" id="NF003417">
    <property type="entry name" value="PRK04813.1"/>
    <property type="match status" value="3"/>
</dbReference>
<dbReference type="PANTHER" id="PTHR45527:SF1">
    <property type="entry name" value="FATTY ACID SYNTHASE"/>
    <property type="match status" value="1"/>
</dbReference>
<dbReference type="PANTHER" id="PTHR45527">
    <property type="entry name" value="NONRIBOSOMAL PEPTIDE SYNTHETASE"/>
    <property type="match status" value="1"/>
</dbReference>
<dbReference type="Pfam" id="PF00501">
    <property type="entry name" value="AMP-binding"/>
    <property type="match status" value="3"/>
</dbReference>
<dbReference type="Pfam" id="PF13193">
    <property type="entry name" value="AMP-binding_C"/>
    <property type="match status" value="1"/>
</dbReference>
<dbReference type="Pfam" id="PF00668">
    <property type="entry name" value="Condensation"/>
    <property type="match status" value="5"/>
</dbReference>
<dbReference type="Pfam" id="PF00550">
    <property type="entry name" value="PP-binding"/>
    <property type="match status" value="5"/>
</dbReference>
<dbReference type="SMART" id="SM00823">
    <property type="entry name" value="PKS_PP"/>
    <property type="match status" value="4"/>
</dbReference>
<dbReference type="SMART" id="SM01294">
    <property type="entry name" value="PKS_PP_betabranch"/>
    <property type="match status" value="1"/>
</dbReference>
<dbReference type="SUPFAM" id="SSF56801">
    <property type="entry name" value="Acetyl-CoA synthetase-like"/>
    <property type="match status" value="3"/>
</dbReference>
<dbReference type="SUPFAM" id="SSF47336">
    <property type="entry name" value="ACP-like"/>
    <property type="match status" value="5"/>
</dbReference>
<dbReference type="SUPFAM" id="SSF52777">
    <property type="entry name" value="CoA-dependent acyltransferases"/>
    <property type="match status" value="10"/>
</dbReference>
<dbReference type="PROSITE" id="PS00455">
    <property type="entry name" value="AMP_BINDING"/>
    <property type="match status" value="3"/>
</dbReference>
<dbReference type="PROSITE" id="PS50075">
    <property type="entry name" value="CARRIER"/>
    <property type="match status" value="5"/>
</dbReference>
<dbReference type="PROSITE" id="PS00012">
    <property type="entry name" value="PHOSPHOPANTETHEINE"/>
    <property type="match status" value="1"/>
</dbReference>